<reference key="1">
    <citation type="journal article" date="2009" name="Physiol. Plantarum">
        <title>The presence of sinapyl lignin in Ginkgo biloba cell cultures changes our views of the evolution of lignin biosynthesis.</title>
        <authorList>
            <person name="Novo Uzal E."/>
            <person name="Gomez Ros L.V."/>
            <person name="Pomar F."/>
            <person name="Bernal M.A."/>
            <person name="Paradela A."/>
            <person name="Albar J.P."/>
            <person name="Ros Barcelo A."/>
        </authorList>
    </citation>
    <scope>PROTEIN SEQUENCE</scope>
    <source>
        <strain>PC-1121</strain>
        <tissue>Callus</tissue>
    </source>
</reference>
<name>GLP2_BETPN</name>
<sequence length="14" mass="1606">AFQLDTNLVESLQK</sequence>
<keyword id="KW-0052">Apoplast</keyword>
<keyword id="KW-0903">Direct protein sequencing</keyword>
<keyword id="KW-0464">Manganese</keyword>
<keyword id="KW-0479">Metal-binding</keyword>
<keyword id="KW-0964">Secreted</keyword>
<proteinExistence type="evidence at protein level"/>
<organism>
    <name type="scientific">Betula pendula</name>
    <name type="common">European white birch</name>
    <name type="synonym">Betula verrucosa</name>
    <dbReference type="NCBI Taxonomy" id="3505"/>
    <lineage>
        <taxon>Eukaryota</taxon>
        <taxon>Viridiplantae</taxon>
        <taxon>Streptophyta</taxon>
        <taxon>Embryophyta</taxon>
        <taxon>Tracheophyta</taxon>
        <taxon>Spermatophyta</taxon>
        <taxon>Magnoliopsida</taxon>
        <taxon>eudicotyledons</taxon>
        <taxon>Gunneridae</taxon>
        <taxon>Pentapetalae</taxon>
        <taxon>rosids</taxon>
        <taxon>fabids</taxon>
        <taxon>Fagales</taxon>
        <taxon>Betulaceae</taxon>
        <taxon>Betula</taxon>
    </lineage>
</organism>
<feature type="chain" id="PRO_0000315911" description="Germin-like protein 2">
    <location>
        <begin position="1" status="less than"/>
        <end position="14" status="greater than"/>
    </location>
</feature>
<feature type="unsure residue" description="Q or K">
    <location>
        <position position="3"/>
    </location>
</feature>
<feature type="unsure residue" description="L or I">
    <location>
        <position position="4"/>
    </location>
</feature>
<feature type="unsure residue" description="L or I">
    <location>
        <position position="8"/>
    </location>
</feature>
<feature type="unsure residue" description="L or I">
    <location>
        <position position="12"/>
    </location>
</feature>
<feature type="unsure residue" description="Q or K">
    <location>
        <position position="13"/>
    </location>
</feature>
<feature type="non-terminal residue">
    <location>
        <position position="1"/>
    </location>
</feature>
<feature type="non-terminal residue">
    <location>
        <position position="14"/>
    </location>
</feature>
<protein>
    <recommendedName>
        <fullName>Germin-like protein 2</fullName>
    </recommendedName>
</protein>
<accession>P85352</accession>
<evidence type="ECO:0000250" key="1"/>
<evidence type="ECO:0000250" key="2">
    <source>
        <dbReference type="UniProtKB" id="P92996"/>
    </source>
</evidence>
<evidence type="ECO:0000255" key="3"/>
<comment type="function">
    <text evidence="1">May play a role in plant defense. Probably has no oxalate oxidase activity even if the active site is conserved (By similarity).</text>
</comment>
<comment type="subunit">
    <text evidence="2">Oligomer (believed to be a pentamer but probably hexamer).</text>
</comment>
<comment type="subcellular location">
    <subcellularLocation>
        <location evidence="2">Secreted</location>
        <location evidence="2">Extracellular space</location>
        <location evidence="2">Apoplast</location>
    </subcellularLocation>
</comment>
<comment type="similarity">
    <text evidence="3">Belongs to the germin family.</text>
</comment>
<dbReference type="GO" id="GO:0048046">
    <property type="term" value="C:apoplast"/>
    <property type="evidence" value="ECO:0007669"/>
    <property type="project" value="UniProtKB-SubCell"/>
</dbReference>
<dbReference type="GO" id="GO:0046872">
    <property type="term" value="F:metal ion binding"/>
    <property type="evidence" value="ECO:0007669"/>
    <property type="project" value="UniProtKB-KW"/>
</dbReference>